<comment type="function">
    <text>Core component of nucleosome. Nucleosomes wrap and compact DNA into chromatin, limiting DNA accessibility to the cellular machineries which require DNA as a template. Histones thereby play a central role in transcription regulation, DNA repair, DNA replication and chromosomal stability. DNA accessibility is regulated via a complex set of post-translational modifications of histones, also called histone code, and nucleosome remodeling.</text>
</comment>
<comment type="subunit">
    <text evidence="7">The nucleosome is a histone octamer containing two molecules each of H2A, H2B, H3 and H4 assembled in one H3-H4 heterotetramer and two H2A-H2B heterodimers (By similarity). The octamer wraps approximately 147 bp of DNA (By similarity). During nucleosome assembly the chaperone ASF1A interacts with the histone H3-H4 heterodimer (via C-terminus of H3); this interaction is direct (By similarity). Interacts with DNAJC9, CHAF1A and CHAF1B (By similarity). Interacts with NASP; NASP is a histone chaperone that stabilizes and maintains a soluble pool of Histone H3-H4 dimers (By similarity).</text>
</comment>
<comment type="subcellular location">
    <subcellularLocation>
        <location>Nucleus</location>
    </subcellularLocation>
    <subcellularLocation>
        <location>Chromosome</location>
    </subcellularLocation>
</comment>
<comment type="developmental stage">
    <text>Expressed during S phase, then expression strongly decreases as cell division slows down during the process of differentiation.</text>
</comment>
<comment type="PTM">
    <text evidence="7">Acetylation is generally linked to gene activation. Acetylation on Lys-10 (H3K9ac) impairs methylation at Arg-9 (H3R8me2s). Acetylation on Lys-19 (H3K18ac) and Lys-24 (H3K24ac) favors methylation at Arg-18 (H3R17me). Acetylation at Lys-123 (H3K122ac) by EP300/p300 plays a central role in chromatin structure: localizes at the surface of the histone octamer and stimulates transcription, possibly by promoting nucleosome instability.</text>
</comment>
<comment type="PTM">
    <text evidence="7">Citrullination at Arg-9 (H3R8ci) and/or Arg-18 (H3R17ci) by PADI4 impairs methylation and represses transcription.</text>
</comment>
<comment type="PTM">
    <text evidence="7">Asymmetric dimethylation at Arg-18 (H3R17me2a) by CARM1 is linked to gene activation. Symmetric dimethylation at Arg-9 (H3R8me2s) by PRMT5 is linked to gene repression. Asymmetric dimethylation at Arg-3 (H3R2me2a) by PRMT6 is linked to gene repression and is mutually exclusive with H3 Lys-5 methylation (H3K4me2 and H3K4me3). H3R2me2a is present at the 3' of genes regardless of their transcription state and is enriched on inactive promoters, while it is absent on active promoters.</text>
</comment>
<comment type="PTM">
    <text evidence="7">Methylation at Lys-5 (H3K4me), Lys-37 (H3K36me) and Lys-80 (H3K79me) are linked to gene activation. Methylation at Lys-5 (H3K4me) facilitates subsequent acetylation of H3 and H4. Methylation at Lys-80 (H3K79me) is associated with DNA double-strand break (DSB) responses and is a specific target for TP53BP1. Methylation at Lys-10 (H3K9me) and Lys-28 (H3K27me) are linked to gene repression. Methylation at Lys-10 (H3K9me) is a specific target for HP1 proteins (CBX1, CBX3 and CBX5) and prevents subsequent phosphorylation at Ser-11 (H3S10ph) and acetylation of H3 and H4. Methylation at Lys-5 (H3K4me) and Lys-80 (H3K79me) require preliminary monoubiquitination of H2B at 'Lys-120'. Methylation at Lys-10 (H3K9me) and Lys-28 (H3K27me) are enriched in inactive X chromosome chromatin. Monomethylation at Lys-57 (H3K56me1) by EHMT2/G9A in G1 phase promotes interaction with PCNA and is required for DNA replication.</text>
</comment>
<comment type="PTM">
    <text evidence="7">Phosphorylated at Thr-4 (H3T3ph) by VRK1 (By similarity). Phosphorylated at Thr-4 (H3T3ph) by HASPIN during prophase and dephosphorylated during anaphase. Phosphorylation at Ser-11 (H3S10ph) by AURKB is crucial for chromosome condensation and cell-cycle progression during mitosis and meiosis. In addition phosphorylation at Ser-11 (H3S10ph) by RPS6KA4 and RPS6KA5 is important during interphase because it enables the transcription of genes following external stimulation, like mitogens, stress, growth factors or UV irradiation and result in the activation of genes, such as c-fos and c-jun. Phosphorylation at Ser-11 (H3S10ph), which is linked to gene activation, prevents methylation at Lys-10 (H3K9me) but facilitates acetylation of H3 and H4. Phosphorylation at Ser-11 (H3S10ph) by AURKB mediates the dissociation of HP1 proteins (CBX1, CBX3 and CBX5) from heterochromatin. Phosphorylation at Ser-11 (H3S10ph) is also an essential regulatory mechanism for neoplastic cell transformation. Phosphorylated at Ser-29 (H3S28ph) by MAP3K20 isoform 1, RPS6KA5 or AURKB during mitosis or upon ultraviolet B irradiation. Phosphorylation at Thr-7 (H3T6ph) by PRKCB is a specific tag for epigenetic transcriptional activation that prevents demethylation of Lys-5 (H3K4me) by LSD1/KDM1A. At centromeres, specifically phosphorylated at Thr-12 (H3T11ph) from prophase to early anaphase, by DAPK3 and PKN1. Phosphorylation at Thr-12 (H3T11ph) by PKN1 or isoform M2 of PKM (PKM2) is a specific tag for epigenetic transcriptional activation that promotes demethylation of Lys-10 (H3K9me) by KDM4C/JMJD2C. Phosphorylation at Tyr-42 (H3Y41ph) by JAK2 promotes exclusion of CBX5 (HP1 alpha) from chromatin.</text>
</comment>
<comment type="PTM">
    <text evidence="1 7">Monoubiquitinated by RAG1 in lymphoid cells, monoubiquitination is required for V(D)J recombination (By similarity). Ubiquitinated by the CUL4-DDB-RBX1 complex in response to ultraviolet irradiation. This may weaken the interaction between histones and DNA and facilitate DNA accessibility to repair proteins (By similarity).</text>
</comment>
<comment type="PTM">
    <text evidence="7">Lysine deamination at Lys-5 (H3K4all) to form allysine is mediated by LOXL2. Allysine formation by LOXL2 only takes place on H3K4me3 and results in gene repression.</text>
</comment>
<comment type="PTM">
    <text evidence="7">Crotonylation (Kcr) is specifically present in male germ cells and marks testis-specific genes in post-meiotic cells, including X-linked genes that escape sex chromosome inactivation in haploid cells. Crotonylation marks active promoters and enhancers and confers resistance to transcriptional repressors. It is also associated with post-meiotically activated genes on autosomes.</text>
</comment>
<comment type="PTM">
    <text evidence="3">Butyrylation of histones marks active promoters and competes with histone acetylation. It is present during late spermatogenesis.</text>
</comment>
<comment type="PTM">
    <text evidence="7">Succinylation at Lys-80 (H3K79succ) by KAT2A takes place with a maximum frequency around the transcription start sites of genes. It gives a specific tag for epigenetic transcription activation. Desuccinylation at Lys-123 (H3K122succ) by SIRT7 in response to DNA damage promotes chromatin condensation and double-strand breaks (DSBs) repair.</text>
</comment>
<comment type="PTM">
    <text evidence="2">Serine ADP-ribosylation by PARP1 or PARP2 constitutes the primary form of ADP-ribosylation of proteins in response to DNA damage. Serine ADP-ribosylation at Ser-11 (H3S10ADPr) promotes recruitment of CHD1L. H3S10ADPr is mutually exclusive with phosphorylation at Ser-11 (H3S10ph) and impairs acetylation at Lys-10 (H3K9ac).</text>
</comment>
<comment type="PTM">
    <text evidence="7">Serotonylated by TGM2 at Gln-6 (H3Q5ser) during serotonergic neuron differentiation (By similarity). H3Q5ser is associated with trimethylation of Lys-5 (H3K4me3) and enhances general transcription factor IID (TFIID) complex-binding to H3K4me3, thereby facilitating transcription (By similarity).</text>
</comment>
<comment type="PTM">
    <text evidence="6 7">Dopaminylated by TGM2 at Gln-6 (H3Q5dop) in ventral tegmental area (VTA) neurons (By similarity). H3Q5dop mediates neurotransmission-independent role of nuclear dopamine by regulating relapse-related transcriptional plasticity in the reward system (By similarity).</text>
</comment>
<comment type="PTM">
    <text evidence="7">Lactylated in macrophages by EP300/P300 by using lactoyl-CoA directly derived from endogenous or exogenous lactate, leading to stimulates gene transcription.</text>
</comment>
<comment type="similarity">
    <text evidence="12">Belongs to the histone H3 family.</text>
</comment>
<proteinExistence type="evidence at protein level"/>
<protein>
    <recommendedName>
        <fullName>Histone H3.2</fullName>
    </recommendedName>
</protein>
<feature type="initiator methionine" description="Removed" evidence="10 11">
    <location>
        <position position="1"/>
    </location>
</feature>
<feature type="chain" id="PRO_0000221257" description="Histone H3.2">
    <location>
        <begin position="2"/>
        <end position="136"/>
    </location>
</feature>
<feature type="region of interest" description="Disordered" evidence="8">
    <location>
        <begin position="1"/>
        <end position="43"/>
    </location>
</feature>
<feature type="modified residue" description="Asymmetric dimethylarginine; by PRMT6; alternate" evidence="7">
    <location>
        <position position="3"/>
    </location>
</feature>
<feature type="modified residue" description="Citrulline; alternate" evidence="7">
    <location>
        <position position="3"/>
    </location>
</feature>
<feature type="modified residue" description="Phosphothreonine; by HASPIN and VRK1" evidence="7">
    <location>
        <position position="4"/>
    </location>
</feature>
<feature type="modified residue" description="Allysine; alternate" evidence="7">
    <location>
        <position position="5"/>
    </location>
</feature>
<feature type="modified residue" description="N6,N6,N6-trimethyllysine; alternate" evidence="7">
    <location>
        <position position="5"/>
    </location>
</feature>
<feature type="modified residue" description="N6,N6-dimethyllysine; alternate" evidence="7">
    <location>
        <position position="5"/>
    </location>
</feature>
<feature type="modified residue" description="N6-(2-hydroxyisobutyryl)lysine; alternate" evidence="2">
    <location>
        <position position="5"/>
    </location>
</feature>
<feature type="modified residue" description="N6-(beta-hydroxybutyryl)lysine; alternate" evidence="3">
    <location>
        <position position="5"/>
    </location>
</feature>
<feature type="modified residue" description="N6-acetyllysine; alternate" evidence="7">
    <location>
        <position position="5"/>
    </location>
</feature>
<feature type="modified residue" description="N6-crotonyllysine; alternate" evidence="7">
    <location>
        <position position="5"/>
    </location>
</feature>
<feature type="modified residue" description="N6-methyllysine; alternate" evidence="7">
    <location>
        <position position="5"/>
    </location>
</feature>
<feature type="modified residue" description="5-glutamyl dopamine; alternate" evidence="7">
    <location>
        <position position="6"/>
    </location>
</feature>
<feature type="modified residue" description="5-glutamyl serotonin; alternate" evidence="7">
    <location>
        <position position="6"/>
    </location>
</feature>
<feature type="modified residue" description="Phosphothreonine; by PKC" evidence="7">
    <location>
        <position position="7"/>
    </location>
</feature>
<feature type="modified residue" description="Citrulline; alternate" evidence="7">
    <location>
        <position position="9"/>
    </location>
</feature>
<feature type="modified residue" description="Symmetric dimethylarginine; by PRMT5; alternate" evidence="4">
    <location>
        <position position="9"/>
    </location>
</feature>
<feature type="modified residue" description="N6,N6,N6-trimethyllysine; alternate" evidence="7">
    <location>
        <position position="10"/>
    </location>
</feature>
<feature type="modified residue" description="N6,N6-dimethyllysine; alternate" evidence="7">
    <location>
        <position position="10"/>
    </location>
</feature>
<feature type="modified residue" description="N6-(2-hydroxyisobutyryl)lysine; alternate" evidence="2">
    <location>
        <position position="10"/>
    </location>
</feature>
<feature type="modified residue" description="N6-(beta-hydroxybutyryl)lysine; alternate" evidence="3">
    <location>
        <position position="10"/>
    </location>
</feature>
<feature type="modified residue" description="N6-acetyllysine; alternate" evidence="7">
    <location>
        <position position="10"/>
    </location>
</feature>
<feature type="modified residue" description="N6-crotonyllysine; alternate" evidence="7">
    <location>
        <position position="10"/>
    </location>
</feature>
<feature type="modified residue" description="N6-lactoyllysine; alternate" evidence="7">
    <location>
        <position position="10"/>
    </location>
</feature>
<feature type="modified residue" description="N6-methyllysine; alternate" evidence="7">
    <location>
        <position position="10"/>
    </location>
</feature>
<feature type="modified residue" description="ADP-ribosylserine; alternate" evidence="2">
    <location>
        <position position="11"/>
    </location>
</feature>
<feature type="modified residue" description="Phosphoserine; alternate; by AURKB, AURKC, RPS6KA3, RPS6KA4 and RPS6KA5" evidence="9">
    <location>
        <position position="11"/>
    </location>
</feature>
<feature type="modified residue" description="Phosphothreonine; by PKC" evidence="2">
    <location>
        <position position="12"/>
    </location>
</feature>
<feature type="modified residue" description="N6-(2-hydroxyisobutyryl)lysine; alternate" evidence="2">
    <location>
        <position position="15"/>
    </location>
</feature>
<feature type="modified residue" description="N6-(beta-hydroxybutyryl)lysine; alternate" evidence="3">
    <location>
        <position position="15"/>
    </location>
</feature>
<feature type="modified residue" description="N6-acetyllysine; alternate" evidence="7">
    <location>
        <position position="15"/>
    </location>
</feature>
<feature type="modified residue" description="N6-glutaryllysine; alternate" evidence="7">
    <location>
        <position position="15"/>
    </location>
</feature>
<feature type="modified residue" description="N6-lactoyllysine; alternate" evidence="4">
    <location>
        <position position="15"/>
    </location>
</feature>
<feature type="modified residue" description="N6-succinyllysine; alternate" evidence="7">
    <location>
        <position position="15"/>
    </location>
</feature>
<feature type="modified residue" description="Asymmetric dimethylarginine; by CARM1; alternate" evidence="7">
    <location>
        <position position="18"/>
    </location>
</feature>
<feature type="modified residue" description="Citrulline; alternate" evidence="7">
    <location>
        <position position="18"/>
    </location>
</feature>
<feature type="modified residue" description="N6-(2-hydroxyisobutyryl)lysine; alternate" evidence="2">
    <location>
        <position position="19"/>
    </location>
</feature>
<feature type="modified residue" description="N6-(beta-hydroxybutyryl)lysine; alternate" evidence="3">
    <location>
        <position position="19"/>
    </location>
</feature>
<feature type="modified residue" description="N6-acetyllysine; alternate" evidence="7">
    <location>
        <position position="19"/>
    </location>
</feature>
<feature type="modified residue" description="N6-butyryllysine; alternate" evidence="3">
    <location>
        <position position="19"/>
    </location>
</feature>
<feature type="modified residue" description="N6-crotonyllysine; alternate" evidence="7">
    <location>
        <position position="19"/>
    </location>
</feature>
<feature type="modified residue" description="N6-glutaryllysine; alternate" evidence="7">
    <location>
        <position position="19"/>
    </location>
</feature>
<feature type="modified residue" description="N6-lactoyllysine; alternate" evidence="7">
    <location>
        <position position="19"/>
    </location>
</feature>
<feature type="modified residue" description="N6-methyllysine; alternate" evidence="7">
    <location>
        <position position="19"/>
    </location>
</feature>
<feature type="modified residue" description="N6-(2-hydroxyisobutyryl)lysine; alternate" evidence="2">
    <location>
        <position position="24"/>
    </location>
</feature>
<feature type="modified residue" description="N6-(beta-hydroxybutyryl)lysine; alternate" evidence="3">
    <location>
        <position position="24"/>
    </location>
</feature>
<feature type="modified residue" description="N6-acetyllysine; alternate" evidence="7">
    <location>
        <position position="24"/>
    </location>
</feature>
<feature type="modified residue" description="N6-butyryllysine; alternate" evidence="3">
    <location>
        <position position="24"/>
    </location>
</feature>
<feature type="modified residue" description="N6-crotonyllysine; alternate" evidence="7">
    <location>
        <position position="24"/>
    </location>
</feature>
<feature type="modified residue" description="N6-glutaryllysine; alternate" evidence="7">
    <location>
        <position position="24"/>
    </location>
</feature>
<feature type="modified residue" description="N6-lactoyllysine; alternate" evidence="7">
    <location>
        <position position="24"/>
    </location>
</feature>
<feature type="modified residue" description="N6-methyllysine; alternate" evidence="7">
    <location>
        <position position="24"/>
    </location>
</feature>
<feature type="modified residue" description="Citrulline" evidence="7">
    <location>
        <position position="27"/>
    </location>
</feature>
<feature type="modified residue" description="N6,N6,N6-trimethyllysine; alternate" evidence="7">
    <location>
        <position position="28"/>
    </location>
</feature>
<feature type="modified residue" description="N6,N6-dimethyllysine; alternate" evidence="7">
    <location>
        <position position="28"/>
    </location>
</feature>
<feature type="modified residue" description="N6-(2-hydroxyisobutyryl)lysine; alternate" evidence="2">
    <location>
        <position position="28"/>
    </location>
</feature>
<feature type="modified residue" description="N6-acetyllysine; alternate" evidence="7">
    <location>
        <position position="28"/>
    </location>
</feature>
<feature type="modified residue" description="N6-crotonyllysine; alternate" evidence="7">
    <location>
        <position position="28"/>
    </location>
</feature>
<feature type="modified residue" description="N6-glutaryllysine; alternate" evidence="7">
    <location>
        <position position="28"/>
    </location>
</feature>
<feature type="modified residue" description="N6-lactoyllysine; alternate" evidence="7">
    <location>
        <position position="28"/>
    </location>
</feature>
<feature type="modified residue" description="N6-methyllysine; alternate" evidence="7">
    <location>
        <position position="28"/>
    </location>
</feature>
<feature type="modified residue" description="ADP-ribosylserine; alternate" evidence="2">
    <location>
        <position position="29"/>
    </location>
</feature>
<feature type="modified residue" description="Phosphoserine; alternate; by AURKB, AURKC and RPS6KA5" evidence="9">
    <location>
        <position position="29"/>
    </location>
</feature>
<feature type="modified residue" description="N6,N6,N6-trimethyllysine; alternate" evidence="7">
    <location>
        <position position="37"/>
    </location>
</feature>
<feature type="modified residue" description="N6,N6-dimethyllysine; alternate" evidence="7">
    <location>
        <position position="37"/>
    </location>
</feature>
<feature type="modified residue" description="N6-(2-hydroxyisobutyryl)lysine; alternate" evidence="2">
    <location>
        <position position="37"/>
    </location>
</feature>
<feature type="modified residue" description="N6-acetyllysine; alternate" evidence="7">
    <location>
        <position position="37"/>
    </location>
</feature>
<feature type="modified residue" description="N6-methyllysine; alternate" evidence="7">
    <location>
        <position position="37"/>
    </location>
</feature>
<feature type="modified residue" description="N6-methyllysine" evidence="2">
    <location>
        <position position="38"/>
    </location>
</feature>
<feature type="modified residue" description="Phosphotyrosine" evidence="7">
    <location>
        <position position="42"/>
    </location>
</feature>
<feature type="modified residue" description="N6,N6,N6-trimethyllysine; alternate" evidence="7">
    <location>
        <position position="57"/>
    </location>
</feature>
<feature type="modified residue" description="N6-(2-hydroxyisobutyryl)lysine; alternate" evidence="2">
    <location>
        <position position="57"/>
    </location>
</feature>
<feature type="modified residue" description="N6-(beta-hydroxybutyryl)lysine; alternate" evidence="3">
    <location>
        <position position="57"/>
    </location>
</feature>
<feature type="modified residue" description="N6-acetyllysine; alternate" evidence="7">
    <location>
        <position position="57"/>
    </location>
</feature>
<feature type="modified residue" description="N6-crotonyllysine; alternate" evidence="7">
    <location>
        <position position="57"/>
    </location>
</feature>
<feature type="modified residue" description="N6-glutaryllysine; alternate" evidence="7">
    <location>
        <position position="57"/>
    </location>
</feature>
<feature type="modified residue" description="N6-lactoyllysine; alternate" evidence="4">
    <location>
        <position position="57"/>
    </location>
</feature>
<feature type="modified residue" description="N6-methyllysine; by EHMT2; alternate" evidence="7">
    <location>
        <position position="57"/>
    </location>
</feature>
<feature type="modified residue" description="N6-succinyllysine; alternate" evidence="7">
    <location>
        <position position="57"/>
    </location>
</feature>
<feature type="modified residue" description="Phosphoserine" evidence="7">
    <location>
        <position position="58"/>
    </location>
</feature>
<feature type="modified residue" description="N6-(2-hydroxyisobutyryl)lysine; alternate" evidence="2">
    <location>
        <position position="65"/>
    </location>
</feature>
<feature type="modified residue" description="N6-methyllysine; alternate" evidence="7">
    <location>
        <position position="65"/>
    </location>
</feature>
<feature type="modified residue" description="N6,N6,N6-trimethyllysine; alternate" evidence="4">
    <location>
        <position position="80"/>
    </location>
</feature>
<feature type="modified residue" description="N6,N6-dimethyllysine; alternate" evidence="7">
    <location>
        <position position="80"/>
    </location>
</feature>
<feature type="modified residue" description="N6-(2-hydroxyisobutyryl)lysine; alternate" evidence="2">
    <location>
        <position position="80"/>
    </location>
</feature>
<feature type="modified residue" description="N6-acetyllysine; alternate" evidence="7">
    <location>
        <position position="80"/>
    </location>
</feature>
<feature type="modified residue" description="N6-glutaryllysine; alternate" evidence="7">
    <location>
        <position position="80"/>
    </location>
</feature>
<feature type="modified residue" description="N6-lactoyllysine; alternate" evidence="7">
    <location>
        <position position="80"/>
    </location>
</feature>
<feature type="modified residue" description="N6-methyllysine; alternate" evidence="7">
    <location>
        <position position="80"/>
    </location>
</feature>
<feature type="modified residue" description="N6-succinyllysine; alternate" evidence="7">
    <location>
        <position position="80"/>
    </location>
</feature>
<feature type="modified residue" description="Phosphothreonine" evidence="7">
    <location>
        <position position="81"/>
    </location>
</feature>
<feature type="modified residue" description="Phosphoserine" evidence="5">
    <location>
        <position position="87"/>
    </location>
</feature>
<feature type="modified residue" description="Phosphothreonine" evidence="7">
    <location>
        <position position="108"/>
    </location>
</feature>
<feature type="modified residue" description="N6-acetyllysine; alternate" evidence="7">
    <location>
        <position position="116"/>
    </location>
</feature>
<feature type="modified residue" description="N6-glutaryllysine; alternate" evidence="7">
    <location>
        <position position="116"/>
    </location>
</feature>
<feature type="modified residue" description="N6-(2-hydroxyisobutyryl)lysine; alternate" evidence="2">
    <location>
        <position position="123"/>
    </location>
</feature>
<feature type="modified residue" description="N6-acetyllysine; alternate" evidence="7">
    <location>
        <position position="123"/>
    </location>
</feature>
<feature type="modified residue" description="N6-glutaryllysine; alternate" evidence="7">
    <location>
        <position position="123"/>
    </location>
</feature>
<feature type="modified residue" description="N6-methyllysine; alternate" evidence="7">
    <location>
        <position position="123"/>
    </location>
</feature>
<feature type="modified residue" description="N6-succinyllysine; alternate" evidence="7">
    <location>
        <position position="123"/>
    </location>
</feature>
<feature type="lipid moiety-binding region" description="N6-decanoyllysine" evidence="7">
    <location>
        <position position="19"/>
    </location>
</feature>
<feature type="lipid moiety-binding region" description="S-palmitoyl cysteine" evidence="7">
    <location>
        <position position="111"/>
    </location>
</feature>
<name>H32_BOVIN</name>
<organism>
    <name type="scientific">Bos taurus</name>
    <name type="common">Bovine</name>
    <dbReference type="NCBI Taxonomy" id="9913"/>
    <lineage>
        <taxon>Eukaryota</taxon>
        <taxon>Metazoa</taxon>
        <taxon>Chordata</taxon>
        <taxon>Craniata</taxon>
        <taxon>Vertebrata</taxon>
        <taxon>Euteleostomi</taxon>
        <taxon>Mammalia</taxon>
        <taxon>Eutheria</taxon>
        <taxon>Laurasiatheria</taxon>
        <taxon>Artiodactyla</taxon>
        <taxon>Ruminantia</taxon>
        <taxon>Pecora</taxon>
        <taxon>Bovidae</taxon>
        <taxon>Bovinae</taxon>
        <taxon>Bos</taxon>
    </lineage>
</organism>
<sequence length="136" mass="15388">MARTKQTARKSTGGKAPRKQLATKAARKSAPATGGVKKPHRYRPGTVALREIRRYQKSTELLIRKLPFQRLVREIAQDFKTDLRFQSSAVMALQEASEAYLVGLFEDTNLCAIHAKRVTIMPKDIQLARRIRGERA</sequence>
<keyword id="KW-0007">Acetylation</keyword>
<keyword id="KW-0013">ADP-ribosylation</keyword>
<keyword id="KW-0158">Chromosome</keyword>
<keyword id="KW-0164">Citrullination</keyword>
<keyword id="KW-0903">Direct protein sequencing</keyword>
<keyword id="KW-0238">DNA-binding</keyword>
<keyword id="KW-0379">Hydroxylation</keyword>
<keyword id="KW-0449">Lipoprotein</keyword>
<keyword id="KW-0488">Methylation</keyword>
<keyword id="KW-0544">Nucleosome core</keyword>
<keyword id="KW-0539">Nucleus</keyword>
<keyword id="KW-0564">Palmitate</keyword>
<keyword id="KW-0597">Phosphoprotein</keyword>
<keyword id="KW-1185">Reference proteome</keyword>
<keyword id="KW-0832">Ubl conjugation</keyword>
<reference key="1">
    <citation type="journal article" date="1972" name="J. Biol. Chem.">
        <title>Two chemically and metabolically distinct forms of calf thymus histone F3.</title>
        <authorList>
            <person name="Marzluff W.F. Jr."/>
            <person name="Sanders L.A."/>
            <person name="Miller D.M."/>
            <person name="McCarty K.S."/>
        </authorList>
    </citation>
    <scope>PROTEIN SEQUENCE OF 2-136</scope>
    <source>
        <tissue>Thymus</tissue>
    </source>
</reference>
<reference key="2">
    <citation type="journal article" date="1975" name="J. Biol. Chem.">
        <title>Histone III. VI. Two forms of calf thymus histone III.</title>
        <authorList>
            <person name="Patthy L."/>
            <person name="Smith E.L."/>
        </authorList>
    </citation>
    <scope>PROTEIN SEQUENCE OF 2-136</scope>
    <source>
        <tissue>Thymus</tissue>
    </source>
</reference>
<reference key="3">
    <citation type="journal article" date="1999" name="J. Biol. Chem.">
        <title>Identification of a novel phosphorylation site on histone H3 coupled with mitotic chromosome condensation.</title>
        <authorList>
            <person name="Goto H."/>
            <person name="Tomono Y."/>
            <person name="Ajiro K."/>
            <person name="Kosako H."/>
            <person name="Fujita M."/>
            <person name="Sakurai M."/>
            <person name="Okawa K."/>
            <person name="Iwamatsu A."/>
            <person name="Okigaki T."/>
            <person name="Takahashi T."/>
            <person name="Inagaki M."/>
        </authorList>
    </citation>
    <scope>PHOSPHORYLATION AT SER-11 AND SER-29</scope>
</reference>
<accession>P84227</accession>
<accession>P02295</accession>
<accession>P02297</accession>
<accession>P16105</accession>
<accession>P17269</accession>
<accession>P17320</accession>
<dbReference type="RefSeq" id="NP_001160041.1">
    <property type="nucleotide sequence ID" value="NM_001166569.1"/>
</dbReference>
<dbReference type="RefSeq" id="NP_001361471.1">
    <property type="nucleotide sequence ID" value="NM_001374542.1"/>
</dbReference>
<dbReference type="RefSeq" id="XP_015318079.1">
    <property type="nucleotide sequence ID" value="XM_015462593.1"/>
</dbReference>
<dbReference type="RefSeq" id="XP_015318510.1">
    <property type="nucleotide sequence ID" value="XM_015463024.3"/>
</dbReference>
<dbReference type="SMR" id="P84227"/>
<dbReference type="FunCoup" id="P84227">
    <property type="interactions" value="831"/>
</dbReference>
<dbReference type="IntAct" id="P84227">
    <property type="interactions" value="1"/>
</dbReference>
<dbReference type="STRING" id="9913.ENSBTAP00000062977"/>
<dbReference type="iPTMnet" id="P84227"/>
<dbReference type="PaxDb" id="9913-ENSBTAP00000050291"/>
<dbReference type="Ensembl" id="ENSBTAT00000071853.2">
    <property type="protein sequence ID" value="ENSBTAP00000072574.1"/>
    <property type="gene ID" value="ENSBTAG00000057526.1"/>
</dbReference>
<dbReference type="GeneID" id="115945173"/>
<dbReference type="GeneID" id="504599"/>
<dbReference type="GeneID" id="788077"/>
<dbReference type="KEGG" id="bta:504599"/>
<dbReference type="KEGG" id="bta:788077"/>
<dbReference type="CTD" id="126961"/>
<dbReference type="CTD" id="653604"/>
<dbReference type="VEuPathDB" id="HostDB:ENSBTAG00000050095"/>
<dbReference type="VEuPathDB" id="HostDB:ENSBTAG00000050881"/>
<dbReference type="VEuPathDB" id="HostDB:ENSBTAG00000051272"/>
<dbReference type="VEuPathDB" id="HostDB:ENSBTAG00000054782"/>
<dbReference type="VEuPathDB" id="HostDB:ENSBTAG00000054906"/>
<dbReference type="eggNOG" id="KOG1745">
    <property type="taxonomic scope" value="Eukaryota"/>
</dbReference>
<dbReference type="GeneTree" id="ENSGT01130000278271"/>
<dbReference type="HOGENOM" id="CLU_078295_4_0_1"/>
<dbReference type="InParanoid" id="P84227"/>
<dbReference type="OMA" id="ASEAYLX"/>
<dbReference type="OrthoDB" id="9679735at2759"/>
<dbReference type="TreeFam" id="TF314241"/>
<dbReference type="Reactome" id="R-BTA-1266695">
    <property type="pathway name" value="Interleukin-7 signaling"/>
</dbReference>
<dbReference type="Reactome" id="R-BTA-201722">
    <property type="pathway name" value="Formation of the beta-catenin:TCF transactivating complex"/>
</dbReference>
<dbReference type="Reactome" id="R-BTA-212300">
    <property type="pathway name" value="PRC2 methylates histones and DNA"/>
</dbReference>
<dbReference type="Reactome" id="R-BTA-2299718">
    <property type="pathway name" value="Condensation of Prophase Chromosomes"/>
</dbReference>
<dbReference type="Reactome" id="R-BTA-2559580">
    <property type="pathway name" value="Oxidative Stress Induced Senescence"/>
</dbReference>
<dbReference type="Reactome" id="R-BTA-2559582">
    <property type="pathway name" value="Senescence-Associated Secretory Phenotype (SASP)"/>
</dbReference>
<dbReference type="Reactome" id="R-BTA-3214815">
    <property type="pathway name" value="HDACs deacetylate histones"/>
</dbReference>
<dbReference type="Reactome" id="R-BTA-3214841">
    <property type="pathway name" value="PKMTs methylate histone lysines"/>
</dbReference>
<dbReference type="Reactome" id="R-BTA-3214842">
    <property type="pathway name" value="HDMs demethylate histones"/>
</dbReference>
<dbReference type="Reactome" id="R-BTA-3214847">
    <property type="pathway name" value="HATs acetylate histones"/>
</dbReference>
<dbReference type="Reactome" id="R-BTA-3214858">
    <property type="pathway name" value="RMTs methylate histone arginines"/>
</dbReference>
<dbReference type="Reactome" id="R-BTA-3247509">
    <property type="pathway name" value="Chromatin modifying enzymes"/>
</dbReference>
<dbReference type="Reactome" id="R-BTA-427359">
    <property type="pathway name" value="SIRT1 negatively regulates rRNA expression"/>
</dbReference>
<dbReference type="Reactome" id="R-BTA-427413">
    <property type="pathway name" value="NoRC negatively regulates rRNA expression"/>
</dbReference>
<dbReference type="Reactome" id="R-BTA-5250924">
    <property type="pathway name" value="B-WICH complex positively regulates rRNA expression"/>
</dbReference>
<dbReference type="Reactome" id="R-BTA-5578749">
    <property type="pathway name" value="Transcriptional regulation by small RNAs"/>
</dbReference>
<dbReference type="Reactome" id="R-BTA-5625886">
    <property type="pathway name" value="Activated PKN1 stimulates transcription of AR (androgen receptor) regulated genes KLK2 and KLK3"/>
</dbReference>
<dbReference type="Reactome" id="R-BTA-68616">
    <property type="pathway name" value="Assembly of the ORC complex at the origin of replication"/>
</dbReference>
<dbReference type="Reactome" id="R-BTA-73728">
    <property type="pathway name" value="RNA Polymerase I Promoter Opening"/>
</dbReference>
<dbReference type="Reactome" id="R-BTA-73772">
    <property type="pathway name" value="RNA Polymerase I Promoter Escape"/>
</dbReference>
<dbReference type="Reactome" id="R-BTA-8936459">
    <property type="pathway name" value="RUNX1 regulates genes involved in megakaryocyte differentiation and platelet function"/>
</dbReference>
<dbReference type="Reactome" id="R-BTA-9018519">
    <property type="pathway name" value="Estrogen-dependent gene expression"/>
</dbReference>
<dbReference type="Reactome" id="R-BTA-983231">
    <property type="pathway name" value="Factors involved in megakaryocyte development and platelet production"/>
</dbReference>
<dbReference type="Reactome" id="R-BTA-9841922">
    <property type="pathway name" value="MLL4 and MLL3 complexes regulate expression of PPARG target genes in adipogenesis and hepatic steatosis"/>
</dbReference>
<dbReference type="Reactome" id="R-BTA-9843940">
    <property type="pathway name" value="Regulation of endogenous retroelements by KRAB-ZFP proteins"/>
</dbReference>
<dbReference type="Reactome" id="R-BTA-9843970">
    <property type="pathway name" value="Regulation of endogenous retroelements by the Human Silencing Hub (HUSH) complex"/>
</dbReference>
<dbReference type="Proteomes" id="UP000009136">
    <property type="component" value="Chromosome 3"/>
</dbReference>
<dbReference type="Bgee" id="ENSBTAG00000050095">
    <property type="expression patterns" value="Expressed in conceptus and 7 other cell types or tissues"/>
</dbReference>
<dbReference type="GO" id="GO:0000786">
    <property type="term" value="C:nucleosome"/>
    <property type="evidence" value="ECO:0007669"/>
    <property type="project" value="UniProtKB-KW"/>
</dbReference>
<dbReference type="GO" id="GO:0005634">
    <property type="term" value="C:nucleus"/>
    <property type="evidence" value="ECO:0007669"/>
    <property type="project" value="UniProtKB-SubCell"/>
</dbReference>
<dbReference type="GO" id="GO:0003677">
    <property type="term" value="F:DNA binding"/>
    <property type="evidence" value="ECO:0007669"/>
    <property type="project" value="UniProtKB-KW"/>
</dbReference>
<dbReference type="GO" id="GO:0046982">
    <property type="term" value="F:protein heterodimerization activity"/>
    <property type="evidence" value="ECO:0007669"/>
    <property type="project" value="InterPro"/>
</dbReference>
<dbReference type="GO" id="GO:0030527">
    <property type="term" value="F:structural constituent of chromatin"/>
    <property type="evidence" value="ECO:0007669"/>
    <property type="project" value="InterPro"/>
</dbReference>
<dbReference type="CDD" id="cd22911">
    <property type="entry name" value="HFD_H3"/>
    <property type="match status" value="1"/>
</dbReference>
<dbReference type="FunFam" id="1.10.20.10:FF:000078">
    <property type="entry name" value="Histone H3"/>
    <property type="match status" value="1"/>
</dbReference>
<dbReference type="FunFam" id="1.10.20.10:FF:000044">
    <property type="entry name" value="Histone H3.3"/>
    <property type="match status" value="1"/>
</dbReference>
<dbReference type="Gene3D" id="1.10.20.10">
    <property type="entry name" value="Histone, subunit A"/>
    <property type="match status" value="1"/>
</dbReference>
<dbReference type="InterPro" id="IPR009072">
    <property type="entry name" value="Histone-fold"/>
</dbReference>
<dbReference type="InterPro" id="IPR007125">
    <property type="entry name" value="Histone_H2A/H2B/H3"/>
</dbReference>
<dbReference type="InterPro" id="IPR000164">
    <property type="entry name" value="Histone_H3/CENP-A"/>
</dbReference>
<dbReference type="PANTHER" id="PTHR11426">
    <property type="entry name" value="HISTONE H3"/>
    <property type="match status" value="1"/>
</dbReference>
<dbReference type="Pfam" id="PF00125">
    <property type="entry name" value="Histone"/>
    <property type="match status" value="1"/>
</dbReference>
<dbReference type="PRINTS" id="PR00622">
    <property type="entry name" value="HISTONEH3"/>
</dbReference>
<dbReference type="SMART" id="SM00428">
    <property type="entry name" value="H3"/>
    <property type="match status" value="1"/>
</dbReference>
<dbReference type="SUPFAM" id="SSF47113">
    <property type="entry name" value="Histone-fold"/>
    <property type="match status" value="1"/>
</dbReference>
<dbReference type="PROSITE" id="PS00322">
    <property type="entry name" value="HISTONE_H3_1"/>
    <property type="match status" value="1"/>
</dbReference>
<dbReference type="PROSITE" id="PS00959">
    <property type="entry name" value="HISTONE_H3_2"/>
    <property type="match status" value="1"/>
</dbReference>
<evidence type="ECO:0000250" key="1"/>
<evidence type="ECO:0000250" key="2">
    <source>
        <dbReference type="UniProtKB" id="P68431"/>
    </source>
</evidence>
<evidence type="ECO:0000250" key="3">
    <source>
        <dbReference type="UniProtKB" id="P68433"/>
    </source>
</evidence>
<evidence type="ECO:0000250" key="4">
    <source>
        <dbReference type="UniProtKB" id="P84228"/>
    </source>
</evidence>
<evidence type="ECO:0000250" key="5">
    <source>
        <dbReference type="UniProtKB" id="P84243"/>
    </source>
</evidence>
<evidence type="ECO:0000250" key="6">
    <source>
        <dbReference type="UniProtKB" id="P84245"/>
    </source>
</evidence>
<evidence type="ECO:0000250" key="7">
    <source>
        <dbReference type="UniProtKB" id="Q71DI3"/>
    </source>
</evidence>
<evidence type="ECO:0000256" key="8">
    <source>
        <dbReference type="SAM" id="MobiDB-lite"/>
    </source>
</evidence>
<evidence type="ECO:0000269" key="9">
    <source>
    </source>
</evidence>
<evidence type="ECO:0000269" key="10">
    <source>
    </source>
</evidence>
<evidence type="ECO:0000269" key="11">
    <source>
    </source>
</evidence>
<evidence type="ECO:0000305" key="12"/>